<feature type="chain" id="PRO_1000129256" description="Trans-aconitate 2-methyltransferase">
    <location>
        <begin position="1"/>
        <end position="252"/>
    </location>
</feature>
<sequence>MSDWNPSLYLHFAAERSRPAVELLARVPLENIKYVADLGCGPGNSTALLHQRWPAARITGIDSSPAMIAEARSALPDCQFVEADIRNWQPEQALDLIFANASLQWLPDHYELFPHLVSLLNPQGVLAVQMPDNWLEPTHVLMREVAWEQNYPDRGREPLAGVHAYYDILSEAGCEVDIWRTTYYHQMPSHQAIIDWVTATGLRPWLQDLTESEQQLFLTRYHQMLEEQYPLQENEQILLAFPRLFIVARRTE</sequence>
<accession>B6IAS2</accession>
<proteinExistence type="inferred from homology"/>
<reference key="1">
    <citation type="journal article" date="2008" name="DNA Res.">
        <title>Complete genome sequence and comparative analysis of the wild-type commensal Escherichia coli strain SE11 isolated from a healthy adult.</title>
        <authorList>
            <person name="Oshima K."/>
            <person name="Toh H."/>
            <person name="Ogura Y."/>
            <person name="Sasamoto H."/>
            <person name="Morita H."/>
            <person name="Park S.-H."/>
            <person name="Ooka T."/>
            <person name="Iyoda S."/>
            <person name="Taylor T.D."/>
            <person name="Hayashi T."/>
            <person name="Itoh K."/>
            <person name="Hattori M."/>
        </authorList>
    </citation>
    <scope>NUCLEOTIDE SEQUENCE [LARGE SCALE GENOMIC DNA]</scope>
    <source>
        <strain>SE11</strain>
    </source>
</reference>
<comment type="function">
    <text evidence="1">Catalyzes the S-adenosylmethionine monomethyl esterification of trans-aconitate.</text>
</comment>
<comment type="catalytic activity">
    <reaction evidence="1">
        <text>trans-aconitate + S-adenosyl-L-methionine = (E)-3-(methoxycarbonyl)pent-2-enedioate + S-adenosyl-L-homocysteine</text>
        <dbReference type="Rhea" id="RHEA:14969"/>
        <dbReference type="ChEBI" id="CHEBI:15708"/>
        <dbReference type="ChEBI" id="CHEBI:57470"/>
        <dbReference type="ChEBI" id="CHEBI:57856"/>
        <dbReference type="ChEBI" id="CHEBI:59789"/>
        <dbReference type="EC" id="2.1.1.144"/>
    </reaction>
</comment>
<comment type="subcellular location">
    <subcellularLocation>
        <location evidence="1">Cytoplasm</location>
    </subcellularLocation>
</comment>
<comment type="similarity">
    <text evidence="1">Belongs to the methyltransferase superfamily. Tam family.</text>
</comment>
<keyword id="KW-0963">Cytoplasm</keyword>
<keyword id="KW-0489">Methyltransferase</keyword>
<keyword id="KW-0949">S-adenosyl-L-methionine</keyword>
<keyword id="KW-0808">Transferase</keyword>
<evidence type="ECO:0000255" key="1">
    <source>
        <dbReference type="HAMAP-Rule" id="MF_00560"/>
    </source>
</evidence>
<protein>
    <recommendedName>
        <fullName evidence="1">Trans-aconitate 2-methyltransferase</fullName>
        <ecNumber evidence="1">2.1.1.144</ecNumber>
    </recommendedName>
</protein>
<dbReference type="EC" id="2.1.1.144" evidence="1"/>
<dbReference type="EMBL" id="AP009240">
    <property type="protein sequence ID" value="BAG77133.1"/>
    <property type="molecule type" value="Genomic_DNA"/>
</dbReference>
<dbReference type="RefSeq" id="WP_001286567.1">
    <property type="nucleotide sequence ID" value="NC_011415.1"/>
</dbReference>
<dbReference type="SMR" id="B6IAS2"/>
<dbReference type="KEGG" id="ecy:ECSE_1609"/>
<dbReference type="HOGENOM" id="CLU_037990_5_2_6"/>
<dbReference type="Proteomes" id="UP000008199">
    <property type="component" value="Chromosome"/>
</dbReference>
<dbReference type="GO" id="GO:0005737">
    <property type="term" value="C:cytoplasm"/>
    <property type="evidence" value="ECO:0007669"/>
    <property type="project" value="UniProtKB-SubCell"/>
</dbReference>
<dbReference type="GO" id="GO:0030798">
    <property type="term" value="F:trans-aconitate 2-methyltransferase activity"/>
    <property type="evidence" value="ECO:0007669"/>
    <property type="project" value="UniProtKB-UniRule"/>
</dbReference>
<dbReference type="GO" id="GO:0032259">
    <property type="term" value="P:methylation"/>
    <property type="evidence" value="ECO:0007669"/>
    <property type="project" value="UniProtKB-KW"/>
</dbReference>
<dbReference type="CDD" id="cd02440">
    <property type="entry name" value="AdoMet_MTases"/>
    <property type="match status" value="1"/>
</dbReference>
<dbReference type="Gene3D" id="1.10.150.290">
    <property type="entry name" value="S-adenosyl-L-methionine-dependent methyltransferases"/>
    <property type="match status" value="1"/>
</dbReference>
<dbReference type="Gene3D" id="3.40.50.150">
    <property type="entry name" value="Vaccinia Virus protein VP39"/>
    <property type="match status" value="1"/>
</dbReference>
<dbReference type="HAMAP" id="MF_00560">
    <property type="entry name" value="Tran_acon_Me_trans"/>
    <property type="match status" value="1"/>
</dbReference>
<dbReference type="InterPro" id="IPR041698">
    <property type="entry name" value="Methyltransf_25"/>
</dbReference>
<dbReference type="InterPro" id="IPR029063">
    <property type="entry name" value="SAM-dependent_MTases_sf"/>
</dbReference>
<dbReference type="InterPro" id="IPR023506">
    <property type="entry name" value="Trans-aconitate_MeTrfase"/>
</dbReference>
<dbReference type="InterPro" id="IPR023149">
    <property type="entry name" value="Trans_acon_MeTrfase_C"/>
</dbReference>
<dbReference type="NCBIfam" id="NF002463">
    <property type="entry name" value="PRK01683.1"/>
    <property type="match status" value="1"/>
</dbReference>
<dbReference type="PANTHER" id="PTHR43861:SF1">
    <property type="entry name" value="TRANS-ACONITATE 2-METHYLTRANSFERASE"/>
    <property type="match status" value="1"/>
</dbReference>
<dbReference type="PANTHER" id="PTHR43861">
    <property type="entry name" value="TRANS-ACONITATE 2-METHYLTRANSFERASE-RELATED"/>
    <property type="match status" value="1"/>
</dbReference>
<dbReference type="Pfam" id="PF13649">
    <property type="entry name" value="Methyltransf_25"/>
    <property type="match status" value="1"/>
</dbReference>
<dbReference type="SUPFAM" id="SSF53335">
    <property type="entry name" value="S-adenosyl-L-methionine-dependent methyltransferases"/>
    <property type="match status" value="1"/>
</dbReference>
<name>TAM_ECOSE</name>
<organism>
    <name type="scientific">Escherichia coli (strain SE11)</name>
    <dbReference type="NCBI Taxonomy" id="409438"/>
    <lineage>
        <taxon>Bacteria</taxon>
        <taxon>Pseudomonadati</taxon>
        <taxon>Pseudomonadota</taxon>
        <taxon>Gammaproteobacteria</taxon>
        <taxon>Enterobacterales</taxon>
        <taxon>Enterobacteriaceae</taxon>
        <taxon>Escherichia</taxon>
    </lineage>
</organism>
<gene>
    <name evidence="1" type="primary">tam</name>
    <name type="ordered locus">ECSE_1609</name>
</gene>